<gene>
    <name evidence="1" type="primary">rpmA</name>
    <name type="ordered locus">Arth_2390</name>
</gene>
<protein>
    <recommendedName>
        <fullName evidence="1">Large ribosomal subunit protein bL27</fullName>
    </recommendedName>
    <alternativeName>
        <fullName evidence="2">50S ribosomal protein L27</fullName>
    </alternativeName>
</protein>
<keyword id="KW-1185">Reference proteome</keyword>
<keyword id="KW-0687">Ribonucleoprotein</keyword>
<keyword id="KW-0689">Ribosomal protein</keyword>
<sequence>MAHKKGASSTRNGRDSNAQYLGVKRFGGQVVSAGEIIVRQRGTHFHPGAGVGRGGDDTLFALTPGAVEFGTRRGRRVVNIVAAAAAE</sequence>
<feature type="chain" id="PRO_1000017408" description="Large ribosomal subunit protein bL27">
    <location>
        <begin position="1"/>
        <end position="87"/>
    </location>
</feature>
<accession>A0JXJ9</accession>
<proteinExistence type="inferred from homology"/>
<reference key="1">
    <citation type="journal article" date="2013" name="Stand. Genomic Sci.">
        <title>Complete genome sequence of Arthrobacter sp. strain FB24.</title>
        <authorList>
            <person name="Nakatsu C.H."/>
            <person name="Barabote R."/>
            <person name="Thompson S."/>
            <person name="Bruce D."/>
            <person name="Detter C."/>
            <person name="Brettin T."/>
            <person name="Han C."/>
            <person name="Beasley F."/>
            <person name="Chen W."/>
            <person name="Konopka A."/>
            <person name="Xie G."/>
        </authorList>
    </citation>
    <scope>NUCLEOTIDE SEQUENCE [LARGE SCALE GENOMIC DNA]</scope>
    <source>
        <strain>FB24</strain>
    </source>
</reference>
<evidence type="ECO:0000255" key="1">
    <source>
        <dbReference type="HAMAP-Rule" id="MF_00539"/>
    </source>
</evidence>
<evidence type="ECO:0000305" key="2"/>
<comment type="similarity">
    <text evidence="1">Belongs to the bacterial ribosomal protein bL27 family.</text>
</comment>
<dbReference type="EMBL" id="CP000454">
    <property type="protein sequence ID" value="ABK03769.1"/>
    <property type="molecule type" value="Genomic_DNA"/>
</dbReference>
<dbReference type="RefSeq" id="WP_009372867.1">
    <property type="nucleotide sequence ID" value="NC_008541.1"/>
</dbReference>
<dbReference type="SMR" id="A0JXJ9"/>
<dbReference type="STRING" id="290399.Arth_2390"/>
<dbReference type="GeneID" id="97422948"/>
<dbReference type="KEGG" id="art:Arth_2390"/>
<dbReference type="eggNOG" id="COG0211">
    <property type="taxonomic scope" value="Bacteria"/>
</dbReference>
<dbReference type="HOGENOM" id="CLU_095424_4_0_11"/>
<dbReference type="OrthoDB" id="9803474at2"/>
<dbReference type="Proteomes" id="UP000000754">
    <property type="component" value="Chromosome"/>
</dbReference>
<dbReference type="GO" id="GO:0022625">
    <property type="term" value="C:cytosolic large ribosomal subunit"/>
    <property type="evidence" value="ECO:0007669"/>
    <property type="project" value="TreeGrafter"/>
</dbReference>
<dbReference type="GO" id="GO:0003735">
    <property type="term" value="F:structural constituent of ribosome"/>
    <property type="evidence" value="ECO:0007669"/>
    <property type="project" value="InterPro"/>
</dbReference>
<dbReference type="GO" id="GO:0006412">
    <property type="term" value="P:translation"/>
    <property type="evidence" value="ECO:0007669"/>
    <property type="project" value="UniProtKB-UniRule"/>
</dbReference>
<dbReference type="FunFam" id="2.40.50.100:FF:000020">
    <property type="entry name" value="50S ribosomal protein L27"/>
    <property type="match status" value="1"/>
</dbReference>
<dbReference type="Gene3D" id="2.40.50.100">
    <property type="match status" value="1"/>
</dbReference>
<dbReference type="HAMAP" id="MF_00539">
    <property type="entry name" value="Ribosomal_bL27"/>
    <property type="match status" value="1"/>
</dbReference>
<dbReference type="InterPro" id="IPR001684">
    <property type="entry name" value="Ribosomal_bL27"/>
</dbReference>
<dbReference type="InterPro" id="IPR018261">
    <property type="entry name" value="Ribosomal_bL27_CS"/>
</dbReference>
<dbReference type="NCBIfam" id="TIGR00062">
    <property type="entry name" value="L27"/>
    <property type="match status" value="1"/>
</dbReference>
<dbReference type="PANTHER" id="PTHR15893:SF0">
    <property type="entry name" value="LARGE RIBOSOMAL SUBUNIT PROTEIN BL27M"/>
    <property type="match status" value="1"/>
</dbReference>
<dbReference type="PANTHER" id="PTHR15893">
    <property type="entry name" value="RIBOSOMAL PROTEIN L27"/>
    <property type="match status" value="1"/>
</dbReference>
<dbReference type="Pfam" id="PF01016">
    <property type="entry name" value="Ribosomal_L27"/>
    <property type="match status" value="1"/>
</dbReference>
<dbReference type="PRINTS" id="PR00063">
    <property type="entry name" value="RIBOSOMALL27"/>
</dbReference>
<dbReference type="SUPFAM" id="SSF110324">
    <property type="entry name" value="Ribosomal L27 protein-like"/>
    <property type="match status" value="1"/>
</dbReference>
<dbReference type="PROSITE" id="PS00831">
    <property type="entry name" value="RIBOSOMAL_L27"/>
    <property type="match status" value="1"/>
</dbReference>
<organism>
    <name type="scientific">Arthrobacter sp. (strain FB24)</name>
    <dbReference type="NCBI Taxonomy" id="290399"/>
    <lineage>
        <taxon>Bacteria</taxon>
        <taxon>Bacillati</taxon>
        <taxon>Actinomycetota</taxon>
        <taxon>Actinomycetes</taxon>
        <taxon>Micrococcales</taxon>
        <taxon>Micrococcaceae</taxon>
        <taxon>Arthrobacter</taxon>
    </lineage>
</organism>
<name>RL27_ARTS2</name>